<feature type="chain" id="PRO_1000045087" description="4-deoxy-L-threo-5-hexosulose-uronate ketol-isomerase">
    <location>
        <begin position="1"/>
        <end position="274"/>
    </location>
</feature>
<feature type="binding site" evidence="1">
    <location>
        <position position="192"/>
    </location>
    <ligand>
        <name>Zn(2+)</name>
        <dbReference type="ChEBI" id="CHEBI:29105"/>
    </ligand>
</feature>
<feature type="binding site" evidence="1">
    <location>
        <position position="194"/>
    </location>
    <ligand>
        <name>Zn(2+)</name>
        <dbReference type="ChEBI" id="CHEBI:29105"/>
    </ligand>
</feature>
<feature type="binding site" evidence="1">
    <location>
        <position position="199"/>
    </location>
    <ligand>
        <name>Zn(2+)</name>
        <dbReference type="ChEBI" id="CHEBI:29105"/>
    </ligand>
</feature>
<feature type="binding site" evidence="1">
    <location>
        <position position="241"/>
    </location>
    <ligand>
        <name>Zn(2+)</name>
        <dbReference type="ChEBI" id="CHEBI:29105"/>
    </ligand>
</feature>
<gene>
    <name evidence="1" type="primary">kduI</name>
    <name type="ordered locus">Rsph17025_2407</name>
</gene>
<reference key="1">
    <citation type="submission" date="2007-04" db="EMBL/GenBank/DDBJ databases">
        <title>Complete sequence of chromosome of Rhodobacter sphaeroides ATCC 17025.</title>
        <authorList>
            <consortium name="US DOE Joint Genome Institute"/>
            <person name="Copeland A."/>
            <person name="Lucas S."/>
            <person name="Lapidus A."/>
            <person name="Barry K."/>
            <person name="Detter J.C."/>
            <person name="Glavina del Rio T."/>
            <person name="Hammon N."/>
            <person name="Israni S."/>
            <person name="Dalin E."/>
            <person name="Tice H."/>
            <person name="Pitluck S."/>
            <person name="Chertkov O."/>
            <person name="Brettin T."/>
            <person name="Bruce D."/>
            <person name="Han C."/>
            <person name="Schmutz J."/>
            <person name="Larimer F."/>
            <person name="Land M."/>
            <person name="Hauser L."/>
            <person name="Kyrpides N."/>
            <person name="Kim E."/>
            <person name="Richardson P."/>
            <person name="Mackenzie C."/>
            <person name="Choudhary M."/>
            <person name="Donohue T.J."/>
            <person name="Kaplan S."/>
        </authorList>
    </citation>
    <scope>NUCLEOTIDE SEQUENCE [LARGE SCALE GENOMIC DNA]</scope>
    <source>
        <strain>ATCC 17025 / ATH 2.4.3</strain>
    </source>
</reference>
<comment type="function">
    <text evidence="1">Catalyzes the isomerization of 5-dehydro-4-deoxy-D-glucuronate to 3-deoxy-D-glycero-2,5-hexodiulosonate.</text>
</comment>
<comment type="catalytic activity">
    <reaction evidence="1">
        <text>5-dehydro-4-deoxy-D-glucuronate = 3-deoxy-D-glycero-2,5-hexodiulosonate</text>
        <dbReference type="Rhea" id="RHEA:23896"/>
        <dbReference type="ChEBI" id="CHEBI:17117"/>
        <dbReference type="ChEBI" id="CHEBI:29071"/>
        <dbReference type="EC" id="5.3.1.17"/>
    </reaction>
</comment>
<comment type="cofactor">
    <cofactor evidence="1">
        <name>Zn(2+)</name>
        <dbReference type="ChEBI" id="CHEBI:29105"/>
    </cofactor>
    <text evidence="1">Binds 1 zinc ion per subunit.</text>
</comment>
<comment type="pathway">
    <text evidence="1">Glycan metabolism; pectin degradation; 2-dehydro-3-deoxy-D-gluconate from pectin: step 4/5.</text>
</comment>
<comment type="similarity">
    <text evidence="1">Belongs to the KduI family.</text>
</comment>
<keyword id="KW-0413">Isomerase</keyword>
<keyword id="KW-0479">Metal-binding</keyword>
<keyword id="KW-0862">Zinc</keyword>
<accession>A4WV81</accession>
<proteinExistence type="inferred from homology"/>
<dbReference type="EC" id="5.3.1.17" evidence="1"/>
<dbReference type="EMBL" id="CP000661">
    <property type="protein sequence ID" value="ABP71295.1"/>
    <property type="molecule type" value="Genomic_DNA"/>
</dbReference>
<dbReference type="SMR" id="A4WV81"/>
<dbReference type="STRING" id="349102.Rsph17025_2407"/>
<dbReference type="KEGG" id="rsq:Rsph17025_2407"/>
<dbReference type="eggNOG" id="COG3717">
    <property type="taxonomic scope" value="Bacteria"/>
</dbReference>
<dbReference type="HOGENOM" id="CLU_062609_0_0_5"/>
<dbReference type="BioCyc" id="RSPH349102:G1G8M-2482-MONOMER"/>
<dbReference type="UniPathway" id="UPA00545">
    <property type="reaction ID" value="UER00826"/>
</dbReference>
<dbReference type="GO" id="GO:0008697">
    <property type="term" value="F:4-deoxy-L-threo-5-hexosulose-uronate ketol-isomerase activity"/>
    <property type="evidence" value="ECO:0007669"/>
    <property type="project" value="UniProtKB-UniRule"/>
</dbReference>
<dbReference type="GO" id="GO:0008270">
    <property type="term" value="F:zinc ion binding"/>
    <property type="evidence" value="ECO:0007669"/>
    <property type="project" value="UniProtKB-UniRule"/>
</dbReference>
<dbReference type="GO" id="GO:0019698">
    <property type="term" value="P:D-galacturonate catabolic process"/>
    <property type="evidence" value="ECO:0007669"/>
    <property type="project" value="TreeGrafter"/>
</dbReference>
<dbReference type="GO" id="GO:0042840">
    <property type="term" value="P:D-glucuronate catabolic process"/>
    <property type="evidence" value="ECO:0007669"/>
    <property type="project" value="TreeGrafter"/>
</dbReference>
<dbReference type="GO" id="GO:0045490">
    <property type="term" value="P:pectin catabolic process"/>
    <property type="evidence" value="ECO:0007669"/>
    <property type="project" value="UniProtKB-UniRule"/>
</dbReference>
<dbReference type="CDD" id="cd20491">
    <property type="entry name" value="cupin_KduI_C"/>
    <property type="match status" value="1"/>
</dbReference>
<dbReference type="CDD" id="cd20294">
    <property type="entry name" value="cupin_KduI_N"/>
    <property type="match status" value="1"/>
</dbReference>
<dbReference type="Gene3D" id="2.60.120.10">
    <property type="entry name" value="Jelly Rolls"/>
    <property type="match status" value="1"/>
</dbReference>
<dbReference type="Gene3D" id="2.60.120.520">
    <property type="entry name" value="pectin degrading enzyme 5-keto 4- deoxyuronate isomerase, domain 1"/>
    <property type="match status" value="1"/>
</dbReference>
<dbReference type="HAMAP" id="MF_00687">
    <property type="entry name" value="KduI"/>
    <property type="match status" value="1"/>
</dbReference>
<dbReference type="InterPro" id="IPR007045">
    <property type="entry name" value="KduI"/>
</dbReference>
<dbReference type="InterPro" id="IPR021120">
    <property type="entry name" value="KduI/IolB_isomerase"/>
</dbReference>
<dbReference type="InterPro" id="IPR027449">
    <property type="entry name" value="KduI_N"/>
</dbReference>
<dbReference type="InterPro" id="IPR014710">
    <property type="entry name" value="RmlC-like_jellyroll"/>
</dbReference>
<dbReference type="InterPro" id="IPR011051">
    <property type="entry name" value="RmlC_Cupin_sf"/>
</dbReference>
<dbReference type="NCBIfam" id="NF002091">
    <property type="entry name" value="PRK00924.1"/>
    <property type="match status" value="1"/>
</dbReference>
<dbReference type="PANTHER" id="PTHR38461">
    <property type="entry name" value="4-DEOXY-L-THREO-5-HEXOSULOSE-URONATE KETOL-ISOMERASE"/>
    <property type="match status" value="1"/>
</dbReference>
<dbReference type="PANTHER" id="PTHR38461:SF1">
    <property type="entry name" value="4-DEOXY-L-THREO-5-HEXOSULOSE-URONATE KETOL-ISOMERASE"/>
    <property type="match status" value="1"/>
</dbReference>
<dbReference type="Pfam" id="PF04962">
    <property type="entry name" value="KduI"/>
    <property type="match status" value="1"/>
</dbReference>
<dbReference type="PIRSF" id="PIRSF006625">
    <property type="entry name" value="KduI"/>
    <property type="match status" value="1"/>
</dbReference>
<dbReference type="SUPFAM" id="SSF51182">
    <property type="entry name" value="RmlC-like cupins"/>
    <property type="match status" value="1"/>
</dbReference>
<sequence length="274" mass="30166">MTHIEIRHAMDPVSARQLDTAGLREAFHMADLFHEGEIRLVYTHYDRMIVGGAVPAGAPLVLDEVKPTGTASILDRREMGVVNIGGPGTVSAAGETWEMGRGDVLYLPMGAGPVTFAGQGRFYILSAPAHTAHPARLVTLADAKKVKMGAPETANERTINQFIHPEVMPSCQLVVGYTQFHGGSVWNTMPAHVHDRRMEVYLYFDLAQHARVFHFMGEPSETRHLVMKNEEAVVSPPWSIHCGCGTGAYTFIWAMAGDNVDYRDVEPVAMEDLR</sequence>
<name>KDUI_CERS5</name>
<protein>
    <recommendedName>
        <fullName evidence="1">4-deoxy-L-threo-5-hexosulose-uronate ketol-isomerase</fullName>
        <ecNumber evidence="1">5.3.1.17</ecNumber>
    </recommendedName>
    <alternativeName>
        <fullName evidence="1">5-keto-4-deoxyuronate isomerase</fullName>
    </alternativeName>
    <alternativeName>
        <fullName evidence="1">DKI isomerase</fullName>
    </alternativeName>
</protein>
<evidence type="ECO:0000255" key="1">
    <source>
        <dbReference type="HAMAP-Rule" id="MF_00687"/>
    </source>
</evidence>
<organism>
    <name type="scientific">Cereibacter sphaeroides (strain ATCC 17025 / ATH 2.4.3)</name>
    <name type="common">Rhodobacter sphaeroides</name>
    <dbReference type="NCBI Taxonomy" id="349102"/>
    <lineage>
        <taxon>Bacteria</taxon>
        <taxon>Pseudomonadati</taxon>
        <taxon>Pseudomonadota</taxon>
        <taxon>Alphaproteobacteria</taxon>
        <taxon>Rhodobacterales</taxon>
        <taxon>Paracoccaceae</taxon>
        <taxon>Cereibacter</taxon>
    </lineage>
</organism>